<accession>A3NZJ2</accession>
<feature type="chain" id="PRO_1000067814" description="Large ribosomal subunit protein bL21">
    <location>
        <begin position="1"/>
        <end position="103"/>
    </location>
</feature>
<protein>
    <recommendedName>
        <fullName evidence="1">Large ribosomal subunit protein bL21</fullName>
    </recommendedName>
    <alternativeName>
        <fullName evidence="2">50S ribosomal protein L21</fullName>
    </alternativeName>
</protein>
<keyword id="KW-0687">Ribonucleoprotein</keyword>
<keyword id="KW-0689">Ribosomal protein</keyword>
<keyword id="KW-0694">RNA-binding</keyword>
<keyword id="KW-0699">rRNA-binding</keyword>
<comment type="function">
    <text evidence="1">This protein binds to 23S rRNA in the presence of protein L20.</text>
</comment>
<comment type="subunit">
    <text evidence="1">Part of the 50S ribosomal subunit. Contacts protein L20.</text>
</comment>
<comment type="similarity">
    <text evidence="1">Belongs to the bacterial ribosomal protein bL21 family.</text>
</comment>
<gene>
    <name evidence="1" type="primary">rplU</name>
    <name type="ordered locus">BURPS1106A_3526</name>
</gene>
<proteinExistence type="inferred from homology"/>
<reference key="1">
    <citation type="journal article" date="2010" name="Genome Biol. Evol.">
        <title>Continuing evolution of Burkholderia mallei through genome reduction and large-scale rearrangements.</title>
        <authorList>
            <person name="Losada L."/>
            <person name="Ronning C.M."/>
            <person name="DeShazer D."/>
            <person name="Woods D."/>
            <person name="Fedorova N."/>
            <person name="Kim H.S."/>
            <person name="Shabalina S.A."/>
            <person name="Pearson T.R."/>
            <person name="Brinkac L."/>
            <person name="Tan P."/>
            <person name="Nandi T."/>
            <person name="Crabtree J."/>
            <person name="Badger J."/>
            <person name="Beckstrom-Sternberg S."/>
            <person name="Saqib M."/>
            <person name="Schutzer S.E."/>
            <person name="Keim P."/>
            <person name="Nierman W.C."/>
        </authorList>
    </citation>
    <scope>NUCLEOTIDE SEQUENCE [LARGE SCALE GENOMIC DNA]</scope>
    <source>
        <strain>1106a</strain>
    </source>
</reference>
<name>RL21_BURP0</name>
<organism>
    <name type="scientific">Burkholderia pseudomallei (strain 1106a)</name>
    <dbReference type="NCBI Taxonomy" id="357348"/>
    <lineage>
        <taxon>Bacteria</taxon>
        <taxon>Pseudomonadati</taxon>
        <taxon>Pseudomonadota</taxon>
        <taxon>Betaproteobacteria</taxon>
        <taxon>Burkholderiales</taxon>
        <taxon>Burkholderiaceae</taxon>
        <taxon>Burkholderia</taxon>
        <taxon>pseudomallei group</taxon>
    </lineage>
</organism>
<sequence>MYAVIKTGGKQYKVAVGEKLKVEQIPADIDAEITLDQVLAVGEGESIQFGTPLVSGASVKATVVSHGRHAKVTIFKMRRRKHYQKHGGHRQNYTELRIDAINA</sequence>
<evidence type="ECO:0000255" key="1">
    <source>
        <dbReference type="HAMAP-Rule" id="MF_01363"/>
    </source>
</evidence>
<evidence type="ECO:0000305" key="2"/>
<dbReference type="EMBL" id="CP000572">
    <property type="protein sequence ID" value="ABN91335.1"/>
    <property type="molecule type" value="Genomic_DNA"/>
</dbReference>
<dbReference type="RefSeq" id="WP_004194344.1">
    <property type="nucleotide sequence ID" value="NC_009076.1"/>
</dbReference>
<dbReference type="SMR" id="A3NZJ2"/>
<dbReference type="GeneID" id="93061605"/>
<dbReference type="KEGG" id="bpl:BURPS1106A_3526"/>
<dbReference type="HOGENOM" id="CLU_061463_3_1_4"/>
<dbReference type="Proteomes" id="UP000006738">
    <property type="component" value="Chromosome I"/>
</dbReference>
<dbReference type="GO" id="GO:0005737">
    <property type="term" value="C:cytoplasm"/>
    <property type="evidence" value="ECO:0007669"/>
    <property type="project" value="UniProtKB-ARBA"/>
</dbReference>
<dbReference type="GO" id="GO:1990904">
    <property type="term" value="C:ribonucleoprotein complex"/>
    <property type="evidence" value="ECO:0007669"/>
    <property type="project" value="UniProtKB-KW"/>
</dbReference>
<dbReference type="GO" id="GO:0005840">
    <property type="term" value="C:ribosome"/>
    <property type="evidence" value="ECO:0007669"/>
    <property type="project" value="UniProtKB-KW"/>
</dbReference>
<dbReference type="GO" id="GO:0019843">
    <property type="term" value="F:rRNA binding"/>
    <property type="evidence" value="ECO:0007669"/>
    <property type="project" value="UniProtKB-UniRule"/>
</dbReference>
<dbReference type="GO" id="GO:0003735">
    <property type="term" value="F:structural constituent of ribosome"/>
    <property type="evidence" value="ECO:0007669"/>
    <property type="project" value="InterPro"/>
</dbReference>
<dbReference type="GO" id="GO:0006412">
    <property type="term" value="P:translation"/>
    <property type="evidence" value="ECO:0007669"/>
    <property type="project" value="UniProtKB-UniRule"/>
</dbReference>
<dbReference type="HAMAP" id="MF_01363">
    <property type="entry name" value="Ribosomal_bL21"/>
    <property type="match status" value="1"/>
</dbReference>
<dbReference type="InterPro" id="IPR028909">
    <property type="entry name" value="bL21-like"/>
</dbReference>
<dbReference type="InterPro" id="IPR036164">
    <property type="entry name" value="bL21-like_sf"/>
</dbReference>
<dbReference type="InterPro" id="IPR001787">
    <property type="entry name" value="Ribosomal_bL21"/>
</dbReference>
<dbReference type="InterPro" id="IPR018258">
    <property type="entry name" value="Ribosomal_bL21_CS"/>
</dbReference>
<dbReference type="NCBIfam" id="TIGR00061">
    <property type="entry name" value="L21"/>
    <property type="match status" value="1"/>
</dbReference>
<dbReference type="PANTHER" id="PTHR21349">
    <property type="entry name" value="50S RIBOSOMAL PROTEIN L21"/>
    <property type="match status" value="1"/>
</dbReference>
<dbReference type="PANTHER" id="PTHR21349:SF0">
    <property type="entry name" value="LARGE RIBOSOMAL SUBUNIT PROTEIN BL21M"/>
    <property type="match status" value="1"/>
</dbReference>
<dbReference type="Pfam" id="PF00829">
    <property type="entry name" value="Ribosomal_L21p"/>
    <property type="match status" value="1"/>
</dbReference>
<dbReference type="SUPFAM" id="SSF141091">
    <property type="entry name" value="L21p-like"/>
    <property type="match status" value="1"/>
</dbReference>
<dbReference type="PROSITE" id="PS01169">
    <property type="entry name" value="RIBOSOMAL_L21"/>
    <property type="match status" value="1"/>
</dbReference>